<feature type="chain" id="PRO_0000121959" description="Probable tRNA pseudouridine synthase B">
    <location>
        <begin position="1"/>
        <end position="336"/>
    </location>
</feature>
<feature type="domain" description="PUA" evidence="1">
    <location>
        <begin position="248"/>
        <end position="323"/>
    </location>
</feature>
<feature type="active site" description="Nucleophile" evidence="1">
    <location>
        <position position="81"/>
    </location>
</feature>
<feature type="strand" evidence="2">
    <location>
        <begin position="18"/>
        <end position="22"/>
    </location>
</feature>
<feature type="helix" evidence="2">
    <location>
        <begin position="34"/>
        <end position="36"/>
    </location>
</feature>
<feature type="helix" evidence="2">
    <location>
        <begin position="39"/>
        <end position="44"/>
    </location>
</feature>
<feature type="strand" evidence="2">
    <location>
        <begin position="46"/>
        <end position="52"/>
    </location>
</feature>
<feature type="strand" evidence="2">
    <location>
        <begin position="54"/>
        <end position="56"/>
    </location>
</feature>
<feature type="helix" evidence="2">
    <location>
        <begin position="58"/>
        <end position="68"/>
    </location>
</feature>
<feature type="strand" evidence="2">
    <location>
        <begin position="74"/>
        <end position="78"/>
    </location>
</feature>
<feature type="strand" evidence="2">
    <location>
        <begin position="85"/>
        <end position="92"/>
    </location>
</feature>
<feature type="helix" evidence="2">
    <location>
        <begin position="93"/>
        <end position="101"/>
    </location>
</feature>
<feature type="strand" evidence="2">
    <location>
        <begin position="107"/>
        <end position="117"/>
    </location>
</feature>
<feature type="helix" evidence="2">
    <location>
        <begin position="121"/>
        <end position="131"/>
    </location>
</feature>
<feature type="strand" evidence="2">
    <location>
        <begin position="132"/>
        <end position="136"/>
    </location>
</feature>
<feature type="strand" evidence="2">
    <location>
        <begin position="151"/>
        <end position="163"/>
    </location>
</feature>
<feature type="strand" evidence="2">
    <location>
        <begin position="166"/>
        <end position="173"/>
    </location>
</feature>
<feature type="helix" evidence="2">
    <location>
        <begin position="179"/>
        <end position="189"/>
    </location>
</feature>
<feature type="strand" evidence="2">
    <location>
        <begin position="194"/>
        <end position="204"/>
    </location>
</feature>
<feature type="helix" evidence="2">
    <location>
        <begin position="209"/>
        <end position="211"/>
    </location>
</feature>
<feature type="helix" evidence="2">
    <location>
        <begin position="215"/>
        <end position="226"/>
    </location>
</feature>
<feature type="helix" evidence="2">
    <location>
        <begin position="232"/>
        <end position="237"/>
    </location>
</feature>
<feature type="strand" evidence="2">
    <location>
        <begin position="238"/>
        <end position="240"/>
    </location>
</feature>
<feature type="helix" evidence="2">
    <location>
        <begin position="241"/>
        <end position="245"/>
    </location>
</feature>
<feature type="strand" evidence="2">
    <location>
        <begin position="248"/>
        <end position="253"/>
    </location>
</feature>
<feature type="helix" evidence="2">
    <location>
        <begin position="255"/>
        <end position="257"/>
    </location>
</feature>
<feature type="helix" evidence="2">
    <location>
        <begin position="258"/>
        <end position="262"/>
    </location>
</feature>
<feature type="helix" evidence="2">
    <location>
        <begin position="269"/>
        <end position="271"/>
    </location>
</feature>
<feature type="strand" evidence="2">
    <location>
        <begin position="272"/>
        <end position="276"/>
    </location>
</feature>
<feature type="strand" evidence="2">
    <location>
        <begin position="284"/>
        <end position="288"/>
    </location>
</feature>
<feature type="strand" evidence="2">
    <location>
        <begin position="294"/>
        <end position="302"/>
    </location>
</feature>
<feature type="helix" evidence="2">
    <location>
        <begin position="304"/>
        <end position="309"/>
    </location>
</feature>
<feature type="strand" evidence="2">
    <location>
        <begin position="311"/>
        <end position="321"/>
    </location>
</feature>
<protein>
    <recommendedName>
        <fullName evidence="1">Probable tRNA pseudouridine synthase B</fullName>
        <ecNumber evidence="1">5.4.99.25</ecNumber>
    </recommendedName>
    <alternativeName>
        <fullName evidence="1">tRNA pseudouridine(55) synthase</fullName>
        <shortName evidence="1">Psi55 synthase</shortName>
    </alternativeName>
    <alternativeName>
        <fullName evidence="1">tRNA pseudouridylate synthase</fullName>
    </alternativeName>
    <alternativeName>
        <fullName evidence="1">tRNA-uridine isomerase</fullName>
    </alternativeName>
</protein>
<dbReference type="EC" id="5.4.99.25" evidence="1"/>
<dbReference type="EMBL" id="L77117">
    <property type="protein sequence ID" value="AAB98132.1"/>
    <property type="molecule type" value="Genomic_DNA"/>
</dbReference>
<dbReference type="PIR" id="E64318">
    <property type="entry name" value="E64318"/>
</dbReference>
<dbReference type="RefSeq" id="WP_010869643.1">
    <property type="nucleotide sequence ID" value="NC_000909.1"/>
</dbReference>
<dbReference type="PDB" id="2APO">
    <property type="method" value="X-ray"/>
    <property type="resolution" value="1.95 A"/>
    <property type="chains" value="A=1-336"/>
</dbReference>
<dbReference type="PDBsum" id="2APO"/>
<dbReference type="SMR" id="Q57612"/>
<dbReference type="DIP" id="DIP-60499N"/>
<dbReference type="FunCoup" id="Q57612">
    <property type="interactions" value="214"/>
</dbReference>
<dbReference type="IntAct" id="Q57612">
    <property type="interactions" value="2"/>
</dbReference>
<dbReference type="STRING" id="243232.MJ_0148"/>
<dbReference type="PaxDb" id="243232-MJ_0148"/>
<dbReference type="EnsemblBacteria" id="AAB98132">
    <property type="protein sequence ID" value="AAB98132"/>
    <property type="gene ID" value="MJ_0148"/>
</dbReference>
<dbReference type="GeneID" id="1450992"/>
<dbReference type="KEGG" id="mja:MJ_0148"/>
<dbReference type="eggNOG" id="arCOG00987">
    <property type="taxonomic scope" value="Archaea"/>
</dbReference>
<dbReference type="HOGENOM" id="CLU_032087_3_0_2"/>
<dbReference type="InParanoid" id="Q57612"/>
<dbReference type="OrthoDB" id="35866at2157"/>
<dbReference type="PhylomeDB" id="Q57612"/>
<dbReference type="EvolutionaryTrace" id="Q57612"/>
<dbReference type="Proteomes" id="UP000000805">
    <property type="component" value="Chromosome"/>
</dbReference>
<dbReference type="GO" id="GO:0009982">
    <property type="term" value="F:pseudouridine synthase activity"/>
    <property type="evidence" value="ECO:0000318"/>
    <property type="project" value="GO_Central"/>
</dbReference>
<dbReference type="GO" id="GO:0003723">
    <property type="term" value="F:RNA binding"/>
    <property type="evidence" value="ECO:0007669"/>
    <property type="project" value="InterPro"/>
</dbReference>
<dbReference type="GO" id="GO:0160148">
    <property type="term" value="F:tRNA pseudouridine(55) synthase activity"/>
    <property type="evidence" value="ECO:0007669"/>
    <property type="project" value="UniProtKB-EC"/>
</dbReference>
<dbReference type="GO" id="GO:0000495">
    <property type="term" value="P:box H/ACA sno(s)RNA 3'-end processing"/>
    <property type="evidence" value="ECO:0000318"/>
    <property type="project" value="GO_Central"/>
</dbReference>
<dbReference type="GO" id="GO:1990481">
    <property type="term" value="P:mRNA pseudouridine synthesis"/>
    <property type="evidence" value="ECO:0000318"/>
    <property type="project" value="GO_Central"/>
</dbReference>
<dbReference type="GO" id="GO:0031118">
    <property type="term" value="P:rRNA pseudouridine synthesis"/>
    <property type="evidence" value="ECO:0000318"/>
    <property type="project" value="GO_Central"/>
</dbReference>
<dbReference type="GO" id="GO:0031120">
    <property type="term" value="P:snRNA pseudouridine synthesis"/>
    <property type="evidence" value="ECO:0000318"/>
    <property type="project" value="GO_Central"/>
</dbReference>
<dbReference type="GO" id="GO:0031119">
    <property type="term" value="P:tRNA pseudouridine synthesis"/>
    <property type="evidence" value="ECO:0007669"/>
    <property type="project" value="UniProtKB-UniRule"/>
</dbReference>
<dbReference type="CDD" id="cd02572">
    <property type="entry name" value="PseudoU_synth_hDyskerin"/>
    <property type="match status" value="1"/>
</dbReference>
<dbReference type="CDD" id="cd21148">
    <property type="entry name" value="PUA_Cbf5"/>
    <property type="match status" value="1"/>
</dbReference>
<dbReference type="FunFam" id="3.30.2350.10:FF:000001">
    <property type="entry name" value="H/ACA ribonucleoprotein complex subunit CBF5"/>
    <property type="match status" value="1"/>
</dbReference>
<dbReference type="Gene3D" id="3.30.2350.10">
    <property type="entry name" value="Pseudouridine synthase"/>
    <property type="match status" value="1"/>
</dbReference>
<dbReference type="Gene3D" id="2.30.130.10">
    <property type="entry name" value="PUA domain"/>
    <property type="match status" value="1"/>
</dbReference>
<dbReference type="HAMAP" id="MF_01081">
    <property type="entry name" value="TruB_arch"/>
    <property type="match status" value="1"/>
</dbReference>
<dbReference type="InterPro" id="IPR012960">
    <property type="entry name" value="Dyskerin-like"/>
</dbReference>
<dbReference type="InterPro" id="IPR020103">
    <property type="entry name" value="PsdUridine_synth_cat_dom_sf"/>
</dbReference>
<dbReference type="InterPro" id="IPR002501">
    <property type="entry name" value="PsdUridine_synth_N"/>
</dbReference>
<dbReference type="InterPro" id="IPR002478">
    <property type="entry name" value="PUA"/>
</dbReference>
<dbReference type="InterPro" id="IPR015947">
    <property type="entry name" value="PUA-like_sf"/>
</dbReference>
<dbReference type="InterPro" id="IPR036974">
    <property type="entry name" value="PUA_sf"/>
</dbReference>
<dbReference type="InterPro" id="IPR004802">
    <property type="entry name" value="tRNA_PsdUridine_synth_B_fam"/>
</dbReference>
<dbReference type="InterPro" id="IPR026326">
    <property type="entry name" value="TruB_arch"/>
</dbReference>
<dbReference type="InterPro" id="IPR032819">
    <property type="entry name" value="TruB_C"/>
</dbReference>
<dbReference type="InterPro" id="IPR004521">
    <property type="entry name" value="Uncharacterised_CHP00451"/>
</dbReference>
<dbReference type="NCBIfam" id="TIGR00425">
    <property type="entry name" value="CBF5"/>
    <property type="match status" value="1"/>
</dbReference>
<dbReference type="NCBIfam" id="NF003280">
    <property type="entry name" value="PRK04270.1"/>
    <property type="match status" value="1"/>
</dbReference>
<dbReference type="NCBIfam" id="TIGR00451">
    <property type="entry name" value="unchar_dom_2"/>
    <property type="match status" value="1"/>
</dbReference>
<dbReference type="PANTHER" id="PTHR23127">
    <property type="entry name" value="CENTROMERE/MICROTUBULE BINDING PROTEIN CBF5"/>
    <property type="match status" value="1"/>
</dbReference>
<dbReference type="PANTHER" id="PTHR23127:SF0">
    <property type="entry name" value="H_ACA RIBONUCLEOPROTEIN COMPLEX SUBUNIT DKC1"/>
    <property type="match status" value="1"/>
</dbReference>
<dbReference type="Pfam" id="PF08068">
    <property type="entry name" value="DKCLD"/>
    <property type="match status" value="1"/>
</dbReference>
<dbReference type="Pfam" id="PF01472">
    <property type="entry name" value="PUA"/>
    <property type="match status" value="1"/>
</dbReference>
<dbReference type="Pfam" id="PF16198">
    <property type="entry name" value="TruB_C_2"/>
    <property type="match status" value="1"/>
</dbReference>
<dbReference type="Pfam" id="PF01509">
    <property type="entry name" value="TruB_N"/>
    <property type="match status" value="1"/>
</dbReference>
<dbReference type="SMART" id="SM01136">
    <property type="entry name" value="DKCLD"/>
    <property type="match status" value="1"/>
</dbReference>
<dbReference type="SMART" id="SM00359">
    <property type="entry name" value="PUA"/>
    <property type="match status" value="1"/>
</dbReference>
<dbReference type="SUPFAM" id="SSF55120">
    <property type="entry name" value="Pseudouridine synthase"/>
    <property type="match status" value="1"/>
</dbReference>
<dbReference type="SUPFAM" id="SSF88697">
    <property type="entry name" value="PUA domain-like"/>
    <property type="match status" value="1"/>
</dbReference>
<dbReference type="PROSITE" id="PS50890">
    <property type="entry name" value="PUA"/>
    <property type="match status" value="1"/>
</dbReference>
<sequence>MILLEKTQEKKINDKEELIVKEEVETNWDYGCNPYERKIEDLIKYGVVVVDKPRGPTSHEVSTWVKKILNLDKAGHGGTLDPKVTGVLPVALERATKTIPMWHIPPKEYVCLMHLHRDASEEDILRVFKEFTGRIYQRPPLKAAVKRRLRIRKIHELELLDKDGKDVLFRVKCQSGTYIRKLCEDIGEALGTSAHMQELRRTKSGCFEEKDAVYLQDLLDAYVFWKEDGDEEELRRVIKPMEYGLRHLKKVVVKDSAVDAICHGADVYVRGIAKLSKGIGKGETVLVETLKGEAVAVGKALMNTKEILNADKGVAVDVERVYMDRGTYPRMWKRKK</sequence>
<proteinExistence type="evidence at protein level"/>
<organism>
    <name type="scientific">Methanocaldococcus jannaschii (strain ATCC 43067 / DSM 2661 / JAL-1 / JCM 10045 / NBRC 100440)</name>
    <name type="common">Methanococcus jannaschii</name>
    <dbReference type="NCBI Taxonomy" id="243232"/>
    <lineage>
        <taxon>Archaea</taxon>
        <taxon>Methanobacteriati</taxon>
        <taxon>Methanobacteriota</taxon>
        <taxon>Methanomada group</taxon>
        <taxon>Methanococci</taxon>
        <taxon>Methanococcales</taxon>
        <taxon>Methanocaldococcaceae</taxon>
        <taxon>Methanocaldococcus</taxon>
    </lineage>
</organism>
<reference key="1">
    <citation type="journal article" date="1996" name="Science">
        <title>Complete genome sequence of the methanogenic archaeon, Methanococcus jannaschii.</title>
        <authorList>
            <person name="Bult C.J."/>
            <person name="White O."/>
            <person name="Olsen G.J."/>
            <person name="Zhou L."/>
            <person name="Fleischmann R.D."/>
            <person name="Sutton G.G."/>
            <person name="Blake J.A."/>
            <person name="FitzGerald L.M."/>
            <person name="Clayton R.A."/>
            <person name="Gocayne J.D."/>
            <person name="Kerlavage A.R."/>
            <person name="Dougherty B.A."/>
            <person name="Tomb J.-F."/>
            <person name="Adams M.D."/>
            <person name="Reich C.I."/>
            <person name="Overbeek R."/>
            <person name="Kirkness E.F."/>
            <person name="Weinstock K.G."/>
            <person name="Merrick J.M."/>
            <person name="Glodek A."/>
            <person name="Scott J.L."/>
            <person name="Geoghagen N.S.M."/>
            <person name="Weidman J.F."/>
            <person name="Fuhrmann J.L."/>
            <person name="Nguyen D."/>
            <person name="Utterback T.R."/>
            <person name="Kelley J.M."/>
            <person name="Peterson J.D."/>
            <person name="Sadow P.W."/>
            <person name="Hanna M.C."/>
            <person name="Cotton M.D."/>
            <person name="Roberts K.M."/>
            <person name="Hurst M.A."/>
            <person name="Kaine B.P."/>
            <person name="Borodovsky M."/>
            <person name="Klenk H.-P."/>
            <person name="Fraser C.M."/>
            <person name="Smith H.O."/>
            <person name="Woese C.R."/>
            <person name="Venter J.C."/>
        </authorList>
    </citation>
    <scope>NUCLEOTIDE SEQUENCE [LARGE SCALE GENOMIC DNA]</scope>
    <source>
        <strain>ATCC 43067 / DSM 2661 / JAL-1 / JCM 10045 / NBRC 100440</strain>
    </source>
</reference>
<comment type="function">
    <text evidence="1">Could be responsible for synthesis of pseudouridine from uracil-55 in the psi GC loop of transfer RNAs.</text>
</comment>
<comment type="catalytic activity">
    <reaction evidence="1">
        <text>uridine(55) in tRNA = pseudouridine(55) in tRNA</text>
        <dbReference type="Rhea" id="RHEA:42532"/>
        <dbReference type="Rhea" id="RHEA-COMP:10101"/>
        <dbReference type="Rhea" id="RHEA-COMP:10102"/>
        <dbReference type="ChEBI" id="CHEBI:65314"/>
        <dbReference type="ChEBI" id="CHEBI:65315"/>
        <dbReference type="EC" id="5.4.99.25"/>
    </reaction>
</comment>
<comment type="interaction">
    <interactant intactId="EBI-9026474">
        <id>Q57612</id>
    </interactant>
    <interactant intactId="EBI-9026465">
        <id>P81303</id>
        <label>nop10</label>
    </interactant>
    <organismsDiffer>false</organismsDiffer>
    <experiments>5</experiments>
</comment>
<comment type="similarity">
    <text evidence="1">Belongs to the pseudouridine synthase TruB family. Type 2 subfamily.</text>
</comment>
<evidence type="ECO:0000255" key="1">
    <source>
        <dbReference type="HAMAP-Rule" id="MF_01081"/>
    </source>
</evidence>
<evidence type="ECO:0007829" key="2">
    <source>
        <dbReference type="PDB" id="2APO"/>
    </source>
</evidence>
<keyword id="KW-0002">3D-structure</keyword>
<keyword id="KW-0413">Isomerase</keyword>
<keyword id="KW-1185">Reference proteome</keyword>
<keyword id="KW-0819">tRNA processing</keyword>
<gene>
    <name evidence="1" type="primary">truB</name>
    <name type="ordered locus">MJ0148</name>
</gene>
<accession>Q57612</accession>
<name>TRUB_METJA</name>